<feature type="chain" id="PRO_0000081361" description="Transcriptional regulatory protein BtsR">
    <location>
        <begin position="1"/>
        <end position="239"/>
    </location>
</feature>
<feature type="domain" description="Response regulatory" evidence="2">
    <location>
        <begin position="3"/>
        <end position="116"/>
    </location>
</feature>
<feature type="domain" description="HTH LytTR-type" evidence="1">
    <location>
        <begin position="137"/>
        <end position="239"/>
    </location>
</feature>
<feature type="modified residue" description="4-aspartylphosphate" evidence="2">
    <location>
        <position position="54"/>
    </location>
</feature>
<feature type="mutagenesis site" description="2-fold increase in btsT induction." evidence="4">
    <original>D</original>
    <variation>E</variation>
    <location>
        <position position="54"/>
    </location>
</feature>
<feature type="mutagenesis site" description="10-fold decrease in btsT induction." evidence="4">
    <original>D</original>
    <variation>N</variation>
    <location>
        <position position="54"/>
    </location>
</feature>
<sequence>MIKVLIVDDEPLARENLRVFLQEQSDIEIVGECSNAVEGIGAVHKLRPDVLFLDIQMPRISGLEMVGMLDPEHRPYIVFLTAFDEYAIKAFEEHAFDYLLKPIDEARLEKTLARLRQERSKQDVSLLPENQQALKFIPCTGHSRIYLLQMKDVAFVSSRMSGVYVTSHEGKEGFTELTLRTLESRTPLLRCHRQYLVNLAHLQEIRLEDNGQAELILRNGLTVPVSRRYLKSLKEAIGL</sequence>
<protein>
    <recommendedName>
        <fullName evidence="8">Transcriptional regulatory protein BtsR</fullName>
    </recommendedName>
</protein>
<proteinExistence type="evidence at protein level"/>
<dbReference type="EMBL" id="U00007">
    <property type="protein sequence ID" value="AAA60488.1"/>
    <property type="status" value="ALT_INIT"/>
    <property type="molecule type" value="Genomic_DNA"/>
</dbReference>
<dbReference type="EMBL" id="U00096">
    <property type="protein sequence ID" value="AAC75186.2"/>
    <property type="molecule type" value="Genomic_DNA"/>
</dbReference>
<dbReference type="EMBL" id="AP009048">
    <property type="protein sequence ID" value="BAE76601.1"/>
    <property type="molecule type" value="Genomic_DNA"/>
</dbReference>
<dbReference type="PIR" id="D64980">
    <property type="entry name" value="D64980"/>
</dbReference>
<dbReference type="RefSeq" id="NP_416629.4">
    <property type="nucleotide sequence ID" value="NC_000913.3"/>
</dbReference>
<dbReference type="RefSeq" id="WP_000598641.1">
    <property type="nucleotide sequence ID" value="NZ_STEB01000002.1"/>
</dbReference>
<dbReference type="SMR" id="P0AFT5"/>
<dbReference type="BioGRID" id="4261849">
    <property type="interactions" value="398"/>
</dbReference>
<dbReference type="BioGRID" id="853268">
    <property type="interactions" value="4"/>
</dbReference>
<dbReference type="DIP" id="DIP-48085N"/>
<dbReference type="FunCoup" id="P0AFT5">
    <property type="interactions" value="112"/>
</dbReference>
<dbReference type="IntAct" id="P0AFT5">
    <property type="interactions" value="3"/>
</dbReference>
<dbReference type="STRING" id="511145.b2125"/>
<dbReference type="jPOST" id="P0AFT5"/>
<dbReference type="PaxDb" id="511145-b2125"/>
<dbReference type="EnsemblBacteria" id="AAC75186">
    <property type="protein sequence ID" value="AAC75186"/>
    <property type="gene ID" value="b2125"/>
</dbReference>
<dbReference type="GeneID" id="93775070"/>
<dbReference type="GeneID" id="949024"/>
<dbReference type="KEGG" id="ecj:JW5352"/>
<dbReference type="KEGG" id="eco:b2125"/>
<dbReference type="KEGG" id="ecoc:C3026_11915"/>
<dbReference type="PATRIC" id="fig|1411691.4.peg.120"/>
<dbReference type="EchoBASE" id="EB1944"/>
<dbReference type="eggNOG" id="COG3279">
    <property type="taxonomic scope" value="Bacteria"/>
</dbReference>
<dbReference type="HOGENOM" id="CLU_000445_14_1_6"/>
<dbReference type="InParanoid" id="P0AFT5"/>
<dbReference type="OMA" id="PLIRCHR"/>
<dbReference type="OrthoDB" id="236568at2"/>
<dbReference type="PhylomeDB" id="P0AFT5"/>
<dbReference type="BioCyc" id="EcoCyc:EG12006-MONOMER"/>
<dbReference type="PRO" id="PR:P0AFT5"/>
<dbReference type="Proteomes" id="UP000000625">
    <property type="component" value="Chromosome"/>
</dbReference>
<dbReference type="GO" id="GO:0005829">
    <property type="term" value="C:cytosol"/>
    <property type="evidence" value="ECO:0000318"/>
    <property type="project" value="GO_Central"/>
</dbReference>
<dbReference type="GO" id="GO:0032993">
    <property type="term" value="C:protein-DNA complex"/>
    <property type="evidence" value="ECO:0000318"/>
    <property type="project" value="GO_Central"/>
</dbReference>
<dbReference type="GO" id="GO:0000156">
    <property type="term" value="F:phosphorelay response regulator activity"/>
    <property type="evidence" value="ECO:0000318"/>
    <property type="project" value="GO_Central"/>
</dbReference>
<dbReference type="GO" id="GO:0000976">
    <property type="term" value="F:transcription cis-regulatory region binding"/>
    <property type="evidence" value="ECO:0000318"/>
    <property type="project" value="GO_Central"/>
</dbReference>
<dbReference type="GO" id="GO:0000160">
    <property type="term" value="P:phosphorelay signal transduction system"/>
    <property type="evidence" value="ECO:0000314"/>
    <property type="project" value="EcoCyc"/>
</dbReference>
<dbReference type="GO" id="GO:0006355">
    <property type="term" value="P:regulation of DNA-templated transcription"/>
    <property type="evidence" value="ECO:0000314"/>
    <property type="project" value="EcoCyc"/>
</dbReference>
<dbReference type="CDD" id="cd17532">
    <property type="entry name" value="REC_LytTR_AlgR-like"/>
    <property type="match status" value="1"/>
</dbReference>
<dbReference type="FunFam" id="2.40.50.1020:FF:000001">
    <property type="entry name" value="Two-component response regulator yehT"/>
    <property type="match status" value="1"/>
</dbReference>
<dbReference type="FunFam" id="3.40.50.2300:FF:000051">
    <property type="entry name" value="Two-component response regulator yehT"/>
    <property type="match status" value="1"/>
</dbReference>
<dbReference type="Gene3D" id="3.40.50.2300">
    <property type="match status" value="1"/>
</dbReference>
<dbReference type="Gene3D" id="2.40.50.1020">
    <property type="entry name" value="LytTr DNA-binding domain"/>
    <property type="match status" value="1"/>
</dbReference>
<dbReference type="InterPro" id="IPR011006">
    <property type="entry name" value="CheY-like_superfamily"/>
</dbReference>
<dbReference type="InterPro" id="IPR046947">
    <property type="entry name" value="LytR-like"/>
</dbReference>
<dbReference type="InterPro" id="IPR007492">
    <property type="entry name" value="LytTR_DNA-bd_dom"/>
</dbReference>
<dbReference type="InterPro" id="IPR001789">
    <property type="entry name" value="Sig_transdc_resp-reg_receiver"/>
</dbReference>
<dbReference type="NCBIfam" id="NF008677">
    <property type="entry name" value="PRK11697.1"/>
    <property type="match status" value="1"/>
</dbReference>
<dbReference type="PANTHER" id="PTHR37299:SF1">
    <property type="entry name" value="STAGE 0 SPORULATION PROTEIN A HOMOLOG"/>
    <property type="match status" value="1"/>
</dbReference>
<dbReference type="PANTHER" id="PTHR37299">
    <property type="entry name" value="TRANSCRIPTIONAL REGULATOR-RELATED"/>
    <property type="match status" value="1"/>
</dbReference>
<dbReference type="Pfam" id="PF04397">
    <property type="entry name" value="LytTR"/>
    <property type="match status" value="1"/>
</dbReference>
<dbReference type="Pfam" id="PF00072">
    <property type="entry name" value="Response_reg"/>
    <property type="match status" value="1"/>
</dbReference>
<dbReference type="SMART" id="SM00850">
    <property type="entry name" value="LytTR"/>
    <property type="match status" value="1"/>
</dbReference>
<dbReference type="SMART" id="SM00448">
    <property type="entry name" value="REC"/>
    <property type="match status" value="1"/>
</dbReference>
<dbReference type="SUPFAM" id="SSF52172">
    <property type="entry name" value="CheY-like"/>
    <property type="match status" value="1"/>
</dbReference>
<dbReference type="PROSITE" id="PS50930">
    <property type="entry name" value="HTH_LYTTR"/>
    <property type="match status" value="1"/>
</dbReference>
<dbReference type="PROSITE" id="PS50110">
    <property type="entry name" value="RESPONSE_REGULATORY"/>
    <property type="match status" value="1"/>
</dbReference>
<name>BTSR_ECOLI</name>
<comment type="function">
    <text evidence="3 4 5 6">Member of the two-component regulatory system BtsS/BtsR, which is part of a nutrient-sensing regulatory network composed of BtsS/BtsR, the low-affinity pyruvate signaling system YpdA/YpdB and their respective target proteins, BtsT and YhjX. Responds to depletion of nutrients, specifically serine, and the concomitant presence of extracellular pyruvate. BtsR regulates expression of btsT by binding to its promoter region. Activation of the BtsS/BtsR signaling cascade also suppresses YpdA/YpdB-mediated yhjX induction.</text>
</comment>
<comment type="interaction">
    <interactant intactId="EBI-556431">
        <id>P0AFT5</id>
    </interactant>
    <interactant intactId="EBI-548584">
        <id>P07004</id>
        <label>proA</label>
    </interactant>
    <organismsDiffer>false</organismsDiffer>
    <experiments>4</experiments>
</comment>
<comment type="interaction">
    <interactant intactId="EBI-556431">
        <id>P0AFT5</id>
    </interactant>
    <interactant intactId="EBI-556413">
        <id>P0A823</id>
        <label>sfsA</label>
    </interactant>
    <organismsDiffer>false</organismsDiffer>
    <experiments>2</experiments>
</comment>
<comment type="PTM">
    <text evidence="3">Phosphorylated by BtsS.</text>
</comment>
<comment type="disruption phenotype">
    <text evidence="4">Deletion of btsSR has no obvious phenotypic effect under the conditions tested.</text>
</comment>
<comment type="sequence caution" evidence="8">
    <conflict type="erroneous initiation">
        <sequence resource="EMBL-CDS" id="AAA60488"/>
    </conflict>
    <text>Extended N-terminus.</text>
</comment>
<reference key="1">
    <citation type="submission" date="1993-10" db="EMBL/GenBank/DDBJ databases">
        <title>Automated multiplex sequencing of the E.coli genome.</title>
        <authorList>
            <person name="Richterich P."/>
            <person name="Lakey N."/>
            <person name="Gryan G."/>
            <person name="Jaehn L."/>
            <person name="Mintz L."/>
            <person name="Robison K."/>
            <person name="Church G.M."/>
        </authorList>
    </citation>
    <scope>NUCLEOTIDE SEQUENCE [LARGE SCALE GENOMIC DNA]</scope>
    <source>
        <strain>K12 / BHB2600</strain>
    </source>
</reference>
<reference key="2">
    <citation type="journal article" date="1997" name="Science">
        <title>The complete genome sequence of Escherichia coli K-12.</title>
        <authorList>
            <person name="Blattner F.R."/>
            <person name="Plunkett G. III"/>
            <person name="Bloch C.A."/>
            <person name="Perna N.T."/>
            <person name="Burland V."/>
            <person name="Riley M."/>
            <person name="Collado-Vides J."/>
            <person name="Glasner J.D."/>
            <person name="Rode C.K."/>
            <person name="Mayhew G.F."/>
            <person name="Gregor J."/>
            <person name="Davis N.W."/>
            <person name="Kirkpatrick H.A."/>
            <person name="Goeden M.A."/>
            <person name="Rose D.J."/>
            <person name="Mau B."/>
            <person name="Shao Y."/>
        </authorList>
    </citation>
    <scope>NUCLEOTIDE SEQUENCE [LARGE SCALE GENOMIC DNA]</scope>
    <source>
        <strain>K12 / MG1655 / ATCC 47076</strain>
    </source>
</reference>
<reference key="3">
    <citation type="journal article" date="2006" name="Mol. Syst. Biol.">
        <title>Highly accurate genome sequences of Escherichia coli K-12 strains MG1655 and W3110.</title>
        <authorList>
            <person name="Hayashi K."/>
            <person name="Morooka N."/>
            <person name="Yamamoto Y."/>
            <person name="Fujita K."/>
            <person name="Isono K."/>
            <person name="Choi S."/>
            <person name="Ohtsubo E."/>
            <person name="Baba T."/>
            <person name="Wanner B.L."/>
            <person name="Mori H."/>
            <person name="Horiuchi T."/>
        </authorList>
    </citation>
    <scope>NUCLEOTIDE SEQUENCE [LARGE SCALE GENOMIC DNA]</scope>
    <source>
        <strain>K12 / W3110 / ATCC 27325 / DSM 5911</strain>
    </source>
</reference>
<reference key="4">
    <citation type="journal article" date="2005" name="J. Biol. Chem.">
        <title>Functional characterization in vitro of all two-component signal transduction systems from Escherichia coli.</title>
        <authorList>
            <person name="Yamamoto K."/>
            <person name="Hirao K."/>
            <person name="Oshima T."/>
            <person name="Aiba H."/>
            <person name="Utsumi R."/>
            <person name="Ishihama A."/>
        </authorList>
    </citation>
    <scope>FUNCTION</scope>
    <scope>PHOSPHORYLATION</scope>
    <source>
        <strain>K12 / W3110 / ATCC 27325 / DSM 5911</strain>
    </source>
</reference>
<reference key="5">
    <citation type="journal article" date="2012" name="J. Bacteriol.">
        <title>First insights into the unexplored two-component system YehU/YehT in Escherichia coli.</title>
        <authorList>
            <person name="Kraxenberger T."/>
            <person name="Fried L."/>
            <person name="Behr S."/>
            <person name="Jung K."/>
        </authorList>
    </citation>
    <scope>FUNCTION</scope>
    <scope>DNA-BINDING</scope>
    <scope>DISRUPTION PHENOTYPE</scope>
    <scope>MUTAGENESIS OF ASP-54</scope>
    <source>
        <strain>K12 / MG1655 / ATCC 47076</strain>
    </source>
</reference>
<reference key="6">
    <citation type="journal article" date="2014" name="J. Bacteriol.">
        <title>Identification of a novel nutrient-sensing histidine kinase/response regulator network in Escherichia coli.</title>
        <authorList>
            <person name="Behr S."/>
            <person name="Fried L."/>
            <person name="Jung K."/>
        </authorList>
    </citation>
    <scope>FUNCTION</scope>
    <source>
        <strain>K12 / MG1655 / ATCC 47076</strain>
    </source>
</reference>
<reference key="7">
    <citation type="journal article" date="2017" name="Sci. Rep.">
        <title>Identification of a high-affinity pyruvate receptor in Escherichia coli.</title>
        <authorList>
            <person name="Behr S."/>
            <person name="Kristoficova I."/>
            <person name="Witting M."/>
            <person name="Breland E.J."/>
            <person name="Eberly A.R."/>
            <person name="Sachs C."/>
            <person name="Schmitt-Kopplin P."/>
            <person name="Hadjifrangiskou M."/>
            <person name="Jung K."/>
        </authorList>
    </citation>
    <scope>FUNCTION</scope>
    <source>
        <strain>K12 / MG1655 / ATCC 47076</strain>
    </source>
</reference>
<keyword id="KW-0238">DNA-binding</keyword>
<keyword id="KW-0597">Phosphoprotein</keyword>
<keyword id="KW-1185">Reference proteome</keyword>
<keyword id="KW-0804">Transcription</keyword>
<keyword id="KW-0805">Transcription regulation</keyword>
<keyword id="KW-0902">Two-component regulatory system</keyword>
<accession>P0AFT5</accession>
<accession>P33356</accession>
<accession>P76432</accession>
<accession>P76433</accession>
<accession>Q2MAV5</accession>
<accession>Q9ALR8</accession>
<gene>
    <name evidence="7" type="primary">btsR</name>
    <name type="synonym">yehT</name>
    <name type="ordered locus">b2125</name>
    <name type="ordered locus">JW5352</name>
</gene>
<organism>
    <name type="scientific">Escherichia coli (strain K12)</name>
    <dbReference type="NCBI Taxonomy" id="83333"/>
    <lineage>
        <taxon>Bacteria</taxon>
        <taxon>Pseudomonadati</taxon>
        <taxon>Pseudomonadota</taxon>
        <taxon>Gammaproteobacteria</taxon>
        <taxon>Enterobacterales</taxon>
        <taxon>Enterobacteriaceae</taxon>
        <taxon>Escherichia</taxon>
    </lineage>
</organism>
<evidence type="ECO:0000255" key="1">
    <source>
        <dbReference type="PROSITE-ProRule" id="PRU00112"/>
    </source>
</evidence>
<evidence type="ECO:0000255" key="2">
    <source>
        <dbReference type="PROSITE-ProRule" id="PRU00169"/>
    </source>
</evidence>
<evidence type="ECO:0000269" key="3">
    <source>
    </source>
</evidence>
<evidence type="ECO:0000269" key="4">
    <source>
    </source>
</evidence>
<evidence type="ECO:0000269" key="5">
    <source>
    </source>
</evidence>
<evidence type="ECO:0000269" key="6">
    <source>
    </source>
</evidence>
<evidence type="ECO:0000303" key="7">
    <source>
    </source>
</evidence>
<evidence type="ECO:0000305" key="8"/>